<gene>
    <name evidence="1" type="primary">mraY</name>
    <name type="ordered locus">CT_757</name>
</gene>
<dbReference type="EC" id="2.7.8.13" evidence="1"/>
<dbReference type="EMBL" id="AE001273">
    <property type="protein sequence ID" value="AAC68352.1"/>
    <property type="molecule type" value="Genomic_DNA"/>
</dbReference>
<dbReference type="PIR" id="D71474">
    <property type="entry name" value="D71474"/>
</dbReference>
<dbReference type="RefSeq" id="NP_220276.1">
    <property type="nucleotide sequence ID" value="NC_000117.1"/>
</dbReference>
<dbReference type="RefSeq" id="WP_009872137.1">
    <property type="nucleotide sequence ID" value="NC_000117.1"/>
</dbReference>
<dbReference type="SMR" id="O84762"/>
<dbReference type="FunCoup" id="O84762">
    <property type="interactions" value="248"/>
</dbReference>
<dbReference type="STRING" id="272561.CT_757"/>
<dbReference type="EnsemblBacteria" id="AAC68352">
    <property type="protein sequence ID" value="AAC68352"/>
    <property type="gene ID" value="CT_757"/>
</dbReference>
<dbReference type="GeneID" id="884554"/>
<dbReference type="KEGG" id="ctr:CT_757"/>
<dbReference type="PATRIC" id="fig|272561.5.peg.832"/>
<dbReference type="HOGENOM" id="CLU_023982_0_1_0"/>
<dbReference type="InParanoid" id="O84762"/>
<dbReference type="OrthoDB" id="9805475at2"/>
<dbReference type="UniPathway" id="UPA00219"/>
<dbReference type="Proteomes" id="UP000000431">
    <property type="component" value="Chromosome"/>
</dbReference>
<dbReference type="GO" id="GO:0005886">
    <property type="term" value="C:plasma membrane"/>
    <property type="evidence" value="ECO:0000318"/>
    <property type="project" value="GO_Central"/>
</dbReference>
<dbReference type="GO" id="GO:0046872">
    <property type="term" value="F:metal ion binding"/>
    <property type="evidence" value="ECO:0007669"/>
    <property type="project" value="UniProtKB-KW"/>
</dbReference>
<dbReference type="GO" id="GO:0008963">
    <property type="term" value="F:phospho-N-acetylmuramoyl-pentapeptide-transferase activity"/>
    <property type="evidence" value="ECO:0007669"/>
    <property type="project" value="UniProtKB-UniRule"/>
</dbReference>
<dbReference type="GO" id="GO:0016780">
    <property type="term" value="F:phosphotransferase activity, for other substituted phosphate groups"/>
    <property type="evidence" value="ECO:0000318"/>
    <property type="project" value="GO_Central"/>
</dbReference>
<dbReference type="GO" id="GO:0051992">
    <property type="term" value="F:UDP-N-acetylmuramoyl-L-alanyl-D-glutamyl-meso-2,6-diaminopimelyl-D-alanyl-D-alanine:undecaprenyl-phosphate transferase activity"/>
    <property type="evidence" value="ECO:0007669"/>
    <property type="project" value="RHEA"/>
</dbReference>
<dbReference type="GO" id="GO:0051301">
    <property type="term" value="P:cell division"/>
    <property type="evidence" value="ECO:0007669"/>
    <property type="project" value="UniProtKB-KW"/>
</dbReference>
<dbReference type="GO" id="GO:0044038">
    <property type="term" value="P:cell wall macromolecule biosynthetic process"/>
    <property type="evidence" value="ECO:0000318"/>
    <property type="project" value="GO_Central"/>
</dbReference>
<dbReference type="GO" id="GO:0071555">
    <property type="term" value="P:cell wall organization"/>
    <property type="evidence" value="ECO:0000318"/>
    <property type="project" value="GO_Central"/>
</dbReference>
<dbReference type="GO" id="GO:0009252">
    <property type="term" value="P:peptidoglycan biosynthetic process"/>
    <property type="evidence" value="ECO:0007669"/>
    <property type="project" value="UniProtKB-UniRule"/>
</dbReference>
<dbReference type="GO" id="GO:0008360">
    <property type="term" value="P:regulation of cell shape"/>
    <property type="evidence" value="ECO:0007669"/>
    <property type="project" value="UniProtKB-KW"/>
</dbReference>
<dbReference type="CDD" id="cd06852">
    <property type="entry name" value="GT_MraY"/>
    <property type="match status" value="1"/>
</dbReference>
<dbReference type="HAMAP" id="MF_00038">
    <property type="entry name" value="MraY"/>
    <property type="match status" value="1"/>
</dbReference>
<dbReference type="InterPro" id="IPR000715">
    <property type="entry name" value="Glycosyl_transferase_4"/>
</dbReference>
<dbReference type="InterPro" id="IPR003524">
    <property type="entry name" value="PNAcMuramoyl-5peptid_Trfase"/>
</dbReference>
<dbReference type="InterPro" id="IPR018480">
    <property type="entry name" value="PNAcMuramoyl-5peptid_Trfase_CS"/>
</dbReference>
<dbReference type="NCBIfam" id="TIGR00445">
    <property type="entry name" value="mraY"/>
    <property type="match status" value="1"/>
</dbReference>
<dbReference type="PANTHER" id="PTHR22926">
    <property type="entry name" value="PHOSPHO-N-ACETYLMURAMOYL-PENTAPEPTIDE-TRANSFERASE"/>
    <property type="match status" value="1"/>
</dbReference>
<dbReference type="PANTHER" id="PTHR22926:SF5">
    <property type="entry name" value="PHOSPHO-N-ACETYLMURAMOYL-PENTAPEPTIDE-TRANSFERASE HOMOLOG"/>
    <property type="match status" value="1"/>
</dbReference>
<dbReference type="Pfam" id="PF00953">
    <property type="entry name" value="Glycos_transf_4"/>
    <property type="match status" value="1"/>
</dbReference>
<dbReference type="PROSITE" id="PS01347">
    <property type="entry name" value="MRAY_1"/>
    <property type="match status" value="1"/>
</dbReference>
<dbReference type="PROSITE" id="PS01348">
    <property type="entry name" value="MRAY_2"/>
    <property type="match status" value="1"/>
</dbReference>
<feature type="chain" id="PRO_0000108808" description="Phospho-N-acetylmuramoyl-pentapeptide-transferase">
    <location>
        <begin position="1"/>
        <end position="336"/>
    </location>
</feature>
<feature type="transmembrane region" description="Helical" evidence="1">
    <location>
        <begin position="1"/>
        <end position="21"/>
    </location>
</feature>
<feature type="transmembrane region" description="Helical" evidence="1">
    <location>
        <begin position="56"/>
        <end position="76"/>
    </location>
</feature>
<feature type="transmembrane region" description="Helical" evidence="1">
    <location>
        <begin position="78"/>
        <end position="98"/>
    </location>
</feature>
<feature type="transmembrane region" description="Helical" evidence="1">
    <location>
        <begin position="124"/>
        <end position="144"/>
    </location>
</feature>
<feature type="transmembrane region" description="Helical" evidence="1">
    <location>
        <begin position="148"/>
        <end position="168"/>
    </location>
</feature>
<feature type="transmembrane region" description="Helical" evidence="1">
    <location>
        <begin position="184"/>
        <end position="204"/>
    </location>
</feature>
<feature type="transmembrane region" description="Helical" evidence="1">
    <location>
        <begin position="210"/>
        <end position="230"/>
    </location>
</feature>
<feature type="transmembrane region" description="Helical" evidence="1">
    <location>
        <begin position="239"/>
        <end position="259"/>
    </location>
</feature>
<feature type="transmembrane region" description="Helical" evidence="1">
    <location>
        <begin position="264"/>
        <end position="284"/>
    </location>
</feature>
<feature type="transmembrane region" description="Helical" evidence="1">
    <location>
        <begin position="314"/>
        <end position="334"/>
    </location>
</feature>
<name>MRAY_CHLTR</name>
<proteinExistence type="inferred from homology"/>
<reference key="1">
    <citation type="journal article" date="1998" name="Science">
        <title>Genome sequence of an obligate intracellular pathogen of humans: Chlamydia trachomatis.</title>
        <authorList>
            <person name="Stephens R.S."/>
            <person name="Kalman S."/>
            <person name="Lammel C.J."/>
            <person name="Fan J."/>
            <person name="Marathe R."/>
            <person name="Aravind L."/>
            <person name="Mitchell W.P."/>
            <person name="Olinger L."/>
            <person name="Tatusov R.L."/>
            <person name="Zhao Q."/>
            <person name="Koonin E.V."/>
            <person name="Davis R.W."/>
        </authorList>
    </citation>
    <scope>NUCLEOTIDE SEQUENCE [LARGE SCALE GENOMIC DNA]</scope>
    <source>
        <strain>ATCC VR-885 / DSM 19411 / UW-3/Cx</strain>
    </source>
</reference>
<comment type="function">
    <text evidence="1">Catalyzes the initial step of the lipid cycle reactions in the biosynthesis of the cell wall peptidoglycan: transfers peptidoglycan precursor phospho-MurNAc-pentapeptide from UDP-MurNAc-pentapeptide onto the lipid carrier undecaprenyl phosphate, yielding undecaprenyl-pyrophosphoryl-MurNAc-pentapeptide, known as lipid I.</text>
</comment>
<comment type="catalytic activity">
    <reaction evidence="1">
        <text>UDP-N-acetyl-alpha-D-muramoyl-L-alanyl-gamma-D-glutamyl-meso-2,6-diaminopimeloyl-D-alanyl-D-alanine + di-trans,octa-cis-undecaprenyl phosphate = di-trans,octa-cis-undecaprenyl diphospho-N-acetyl-alpha-D-muramoyl-L-alanyl-D-glutamyl-meso-2,6-diaminopimeloyl-D-alanyl-D-alanine + UMP</text>
        <dbReference type="Rhea" id="RHEA:28386"/>
        <dbReference type="ChEBI" id="CHEBI:57865"/>
        <dbReference type="ChEBI" id="CHEBI:60392"/>
        <dbReference type="ChEBI" id="CHEBI:61386"/>
        <dbReference type="ChEBI" id="CHEBI:61387"/>
        <dbReference type="EC" id="2.7.8.13"/>
    </reaction>
</comment>
<comment type="cofactor">
    <cofactor evidence="1">
        <name>Mg(2+)</name>
        <dbReference type="ChEBI" id="CHEBI:18420"/>
    </cofactor>
</comment>
<comment type="pathway">
    <text evidence="1">Cell wall biogenesis; peptidoglycan biosynthesis.</text>
</comment>
<comment type="subcellular location">
    <subcellularLocation>
        <location evidence="1">Cell inner membrane</location>
        <topology evidence="1">Multi-pass membrane protein</topology>
    </subcellularLocation>
</comment>
<comment type="similarity">
    <text evidence="1">Belongs to the glycosyltransferase 4 family. MraY subfamily.</text>
</comment>
<keyword id="KW-0131">Cell cycle</keyword>
<keyword id="KW-0132">Cell division</keyword>
<keyword id="KW-0997">Cell inner membrane</keyword>
<keyword id="KW-1003">Cell membrane</keyword>
<keyword id="KW-0133">Cell shape</keyword>
<keyword id="KW-0961">Cell wall biogenesis/degradation</keyword>
<keyword id="KW-0460">Magnesium</keyword>
<keyword id="KW-0472">Membrane</keyword>
<keyword id="KW-0479">Metal-binding</keyword>
<keyword id="KW-0573">Peptidoglycan synthesis</keyword>
<keyword id="KW-1185">Reference proteome</keyword>
<keyword id="KW-0808">Transferase</keyword>
<keyword id="KW-0812">Transmembrane</keyword>
<keyword id="KW-1133">Transmembrane helix</keyword>
<accession>O84762</accession>
<evidence type="ECO:0000255" key="1">
    <source>
        <dbReference type="HAMAP-Rule" id="MF_00038"/>
    </source>
</evidence>
<organism>
    <name type="scientific">Chlamydia trachomatis serovar D (strain ATCC VR-885 / DSM 19411 / UW-3/Cx)</name>
    <dbReference type="NCBI Taxonomy" id="272561"/>
    <lineage>
        <taxon>Bacteria</taxon>
        <taxon>Pseudomonadati</taxon>
        <taxon>Chlamydiota</taxon>
        <taxon>Chlamydiia</taxon>
        <taxon>Chlamydiales</taxon>
        <taxon>Chlamydiaceae</taxon>
        <taxon>Chlamydia/Chlamydophila group</taxon>
        <taxon>Chlamydia</taxon>
    </lineage>
</organism>
<protein>
    <recommendedName>
        <fullName evidence="1">Phospho-N-acetylmuramoyl-pentapeptide-transferase</fullName>
        <ecNumber evidence="1">2.7.8.13</ecNumber>
    </recommendedName>
    <alternativeName>
        <fullName evidence="1">UDP-MurNAc-pentapeptide phosphotransferase</fullName>
    </alternativeName>
</protein>
<sequence length="336" mass="37091">MLPLTYVVKAFSIGLFFSLFLMKPLISWLKKQGFQDHIHKDHCEKLEELHKDKAYIPTAGGIVFVFASVLAVLLLFPIQLWSTWFCIGTILLWGALGWCDDQIKNRRRVGHGLSAKHKFLIQNCLAAGVVLPIMFAYKESFLSFHLPFLGIVSLPHHWWSYLLSFAIATLAIVGTSNSVNLTDGLDGLAAGAMVIACLGMLVVACTNGAPWAFICCVLLATLAGSCLGFLRYNKSPARVFMGDTGSLFLGAMLGMCAVLLRAEFLLLFMGGIFVLESLSVIVQVGSYKLRKKRVFLCAPLHHHYEYKGLSEKAVVRNFLIVELICVVVGIIAVFVD</sequence>